<comment type="function">
    <text evidence="1">Involved in iron-sulfur (Fe-S) cluster assembly. May act as a regulator of Fe-S biogenesis.</text>
</comment>
<comment type="similarity">
    <text evidence="1">Belongs to the frataxin family.</text>
</comment>
<sequence>MNDSEFHRLADQLWLTIEERLDDWDGDSDIDCEINGGVLTITFENGSKIIINRQEPLHQVWLATKQGGYHFDLKGDEWICDRSGETFWDLLEQAATQQAGETVSFR</sequence>
<feature type="chain" id="PRO_1000096246" description="Iron-sulfur cluster assembly protein CyaY">
    <location>
        <begin position="1"/>
        <end position="106"/>
    </location>
</feature>
<dbReference type="EMBL" id="AP009240">
    <property type="protein sequence ID" value="BAG79612.1"/>
    <property type="molecule type" value="Genomic_DNA"/>
</dbReference>
<dbReference type="RefSeq" id="WP_000999947.1">
    <property type="nucleotide sequence ID" value="NC_011415.1"/>
</dbReference>
<dbReference type="BMRB" id="B6I4E2"/>
<dbReference type="SMR" id="B6I4E2"/>
<dbReference type="GeneID" id="93778137"/>
<dbReference type="KEGG" id="ecy:ECSE_4088"/>
<dbReference type="HOGENOM" id="CLU_080880_3_0_6"/>
<dbReference type="Proteomes" id="UP000008199">
    <property type="component" value="Chromosome"/>
</dbReference>
<dbReference type="GO" id="GO:0005829">
    <property type="term" value="C:cytosol"/>
    <property type="evidence" value="ECO:0007669"/>
    <property type="project" value="TreeGrafter"/>
</dbReference>
<dbReference type="GO" id="GO:0008199">
    <property type="term" value="F:ferric iron binding"/>
    <property type="evidence" value="ECO:0007669"/>
    <property type="project" value="InterPro"/>
</dbReference>
<dbReference type="GO" id="GO:0008198">
    <property type="term" value="F:ferrous iron binding"/>
    <property type="evidence" value="ECO:0007669"/>
    <property type="project" value="TreeGrafter"/>
</dbReference>
<dbReference type="GO" id="GO:0016226">
    <property type="term" value="P:iron-sulfur cluster assembly"/>
    <property type="evidence" value="ECO:0007669"/>
    <property type="project" value="UniProtKB-UniRule"/>
</dbReference>
<dbReference type="CDD" id="cd00503">
    <property type="entry name" value="Frataxin"/>
    <property type="match status" value="1"/>
</dbReference>
<dbReference type="FunFam" id="3.30.920.10:FF:000001">
    <property type="entry name" value="Iron-sulfur cluster assembly protein CyaY"/>
    <property type="match status" value="1"/>
</dbReference>
<dbReference type="Gene3D" id="3.30.920.10">
    <property type="entry name" value="Frataxin/CyaY"/>
    <property type="match status" value="1"/>
</dbReference>
<dbReference type="HAMAP" id="MF_00142">
    <property type="entry name" value="CyaY"/>
    <property type="match status" value="1"/>
</dbReference>
<dbReference type="InterPro" id="IPR047584">
    <property type="entry name" value="CyaY"/>
</dbReference>
<dbReference type="InterPro" id="IPR002908">
    <property type="entry name" value="Frataxin/CyaY"/>
</dbReference>
<dbReference type="InterPro" id="IPR036524">
    <property type="entry name" value="Frataxin/CyaY_sf"/>
</dbReference>
<dbReference type="InterPro" id="IPR020895">
    <property type="entry name" value="Frataxin_CS"/>
</dbReference>
<dbReference type="NCBIfam" id="TIGR03421">
    <property type="entry name" value="FeS_CyaY"/>
    <property type="match status" value="1"/>
</dbReference>
<dbReference type="PANTHER" id="PTHR16821">
    <property type="entry name" value="FRATAXIN"/>
    <property type="match status" value="1"/>
</dbReference>
<dbReference type="PANTHER" id="PTHR16821:SF2">
    <property type="entry name" value="FRATAXIN, MITOCHONDRIAL"/>
    <property type="match status" value="1"/>
</dbReference>
<dbReference type="Pfam" id="PF01491">
    <property type="entry name" value="Frataxin_Cyay"/>
    <property type="match status" value="1"/>
</dbReference>
<dbReference type="SMART" id="SM01219">
    <property type="entry name" value="Frataxin_Cyay"/>
    <property type="match status" value="1"/>
</dbReference>
<dbReference type="SUPFAM" id="SSF55387">
    <property type="entry name" value="Frataxin/Nqo15-like"/>
    <property type="match status" value="1"/>
</dbReference>
<dbReference type="PROSITE" id="PS01344">
    <property type="entry name" value="FRATAXIN_1"/>
    <property type="match status" value="1"/>
</dbReference>
<dbReference type="PROSITE" id="PS50810">
    <property type="entry name" value="FRATAXIN_2"/>
    <property type="match status" value="1"/>
</dbReference>
<accession>B6I4E2</accession>
<proteinExistence type="inferred from homology"/>
<reference key="1">
    <citation type="journal article" date="2008" name="DNA Res.">
        <title>Complete genome sequence and comparative analysis of the wild-type commensal Escherichia coli strain SE11 isolated from a healthy adult.</title>
        <authorList>
            <person name="Oshima K."/>
            <person name="Toh H."/>
            <person name="Ogura Y."/>
            <person name="Sasamoto H."/>
            <person name="Morita H."/>
            <person name="Park S.-H."/>
            <person name="Ooka T."/>
            <person name="Iyoda S."/>
            <person name="Taylor T.D."/>
            <person name="Hayashi T."/>
            <person name="Itoh K."/>
            <person name="Hattori M."/>
        </authorList>
    </citation>
    <scope>NUCLEOTIDE SEQUENCE [LARGE SCALE GENOMIC DNA]</scope>
    <source>
        <strain>SE11</strain>
    </source>
</reference>
<gene>
    <name evidence="1" type="primary">cyaY</name>
    <name type="ordered locus">ECSE_4088</name>
</gene>
<name>CYAY_ECOSE</name>
<evidence type="ECO:0000255" key="1">
    <source>
        <dbReference type="HAMAP-Rule" id="MF_00142"/>
    </source>
</evidence>
<keyword id="KW-0408">Iron</keyword>
<keyword id="KW-0479">Metal-binding</keyword>
<protein>
    <recommendedName>
        <fullName evidence="1">Iron-sulfur cluster assembly protein CyaY</fullName>
    </recommendedName>
</protein>
<organism>
    <name type="scientific">Escherichia coli (strain SE11)</name>
    <dbReference type="NCBI Taxonomy" id="409438"/>
    <lineage>
        <taxon>Bacteria</taxon>
        <taxon>Pseudomonadati</taxon>
        <taxon>Pseudomonadota</taxon>
        <taxon>Gammaproteobacteria</taxon>
        <taxon>Enterobacterales</taxon>
        <taxon>Enterobacteriaceae</taxon>
        <taxon>Escherichia</taxon>
    </lineage>
</organism>